<comment type="subcellular location">
    <subcellularLocation>
        <location evidence="1">Cell inner membrane</location>
        <topology evidence="1">Multi-pass membrane protein</topology>
    </subcellularLocation>
</comment>
<comment type="similarity">
    <text evidence="1">Belongs to the major facilitator superfamily. YcaD (TC 2.A.1.26) family.</text>
</comment>
<organism>
    <name type="scientific">Escherichia fergusonii (strain ATCC 35469 / DSM 13698 / CCUG 18766 / IAM 14443 / JCM 21226 / LMG 7866 / NBRC 102419 / NCTC 12128 / CDC 0568-73)</name>
    <dbReference type="NCBI Taxonomy" id="585054"/>
    <lineage>
        <taxon>Bacteria</taxon>
        <taxon>Pseudomonadati</taxon>
        <taxon>Pseudomonadota</taxon>
        <taxon>Gammaproteobacteria</taxon>
        <taxon>Enterobacterales</taxon>
        <taxon>Enterobacteriaceae</taxon>
        <taxon>Escherichia</taxon>
    </lineage>
</organism>
<sequence>MSIYTRPVMLLLSGLLLLTLAIAVLNTLVPLWLAHEHLPTWQVGMVSSSYFTGNLVGTLLTGYLIKRLGFNRSYYLASLVFAAGCLGLGLMIGFWSWMAWRFVAGVGCAMIWVVVESALMCSGTSRNRGRLLAAYMMIYYVGTFLGQLLVSKVSTELMNVLPWVTALILAGILPLLFTRILSQQTESRKTTSITSMLKLRQARLGVNGCIISGIVLGSLYGLMPLYLNHQGISNSNIGFWMAVLVSAGIVGQWPIGRLADKFGRLLVLRVQIFVVILGSIAMLTHTAMAPALFILGAAGFTLYPVAMAWSCEKVSQDQLVAMNQALLLSYTIGSLLGPSFTAMLMQHYSDNLLFIMIASVSFIYLLMLLRNARHTSNPVAHV</sequence>
<reference key="1">
    <citation type="journal article" date="2009" name="PLoS Genet.">
        <title>Organised genome dynamics in the Escherichia coli species results in highly diverse adaptive paths.</title>
        <authorList>
            <person name="Touchon M."/>
            <person name="Hoede C."/>
            <person name="Tenaillon O."/>
            <person name="Barbe V."/>
            <person name="Baeriswyl S."/>
            <person name="Bidet P."/>
            <person name="Bingen E."/>
            <person name="Bonacorsi S."/>
            <person name="Bouchier C."/>
            <person name="Bouvet O."/>
            <person name="Calteau A."/>
            <person name="Chiapello H."/>
            <person name="Clermont O."/>
            <person name="Cruveiller S."/>
            <person name="Danchin A."/>
            <person name="Diard M."/>
            <person name="Dossat C."/>
            <person name="Karoui M.E."/>
            <person name="Frapy E."/>
            <person name="Garry L."/>
            <person name="Ghigo J.M."/>
            <person name="Gilles A.M."/>
            <person name="Johnson J."/>
            <person name="Le Bouguenec C."/>
            <person name="Lescat M."/>
            <person name="Mangenot S."/>
            <person name="Martinez-Jehanne V."/>
            <person name="Matic I."/>
            <person name="Nassif X."/>
            <person name="Oztas S."/>
            <person name="Petit M.A."/>
            <person name="Pichon C."/>
            <person name="Rouy Z."/>
            <person name="Ruf C.S."/>
            <person name="Schneider D."/>
            <person name="Tourret J."/>
            <person name="Vacherie B."/>
            <person name="Vallenet D."/>
            <person name="Medigue C."/>
            <person name="Rocha E.P.C."/>
            <person name="Denamur E."/>
        </authorList>
    </citation>
    <scope>NUCLEOTIDE SEQUENCE [LARGE SCALE GENOMIC DNA]</scope>
    <source>
        <strain>ATCC 35469 / DSM 13698 / BCRC 15582 / CCUG 18766 / IAM 14443 / JCM 21226 / LMG 7866 / NBRC 102419 / NCTC 12128 / CDC 0568-73</strain>
    </source>
</reference>
<name>YCAD_ESCF3</name>
<gene>
    <name evidence="1" type="primary">ycaD</name>
    <name type="ordered locus">EFER_1045</name>
</gene>
<evidence type="ECO:0000255" key="1">
    <source>
        <dbReference type="HAMAP-Rule" id="MF_01149"/>
    </source>
</evidence>
<feature type="chain" id="PRO_1000137491" description="Uncharacterized MFS-type transporter YcaD">
    <location>
        <begin position="1"/>
        <end position="382"/>
    </location>
</feature>
<feature type="transmembrane region" description="Helical" evidence="1">
    <location>
        <begin position="14"/>
        <end position="34"/>
    </location>
</feature>
<feature type="transmembrane region" description="Helical" evidence="1">
    <location>
        <begin position="45"/>
        <end position="65"/>
    </location>
</feature>
<feature type="transmembrane region" description="Helical" evidence="1">
    <location>
        <begin position="79"/>
        <end position="99"/>
    </location>
</feature>
<feature type="transmembrane region" description="Helical" evidence="1">
    <location>
        <begin position="102"/>
        <end position="122"/>
    </location>
</feature>
<feature type="transmembrane region" description="Helical" evidence="1">
    <location>
        <begin position="131"/>
        <end position="151"/>
    </location>
</feature>
<feature type="transmembrane region" description="Helical" evidence="1">
    <location>
        <begin position="157"/>
        <end position="177"/>
    </location>
</feature>
<feature type="transmembrane region" description="Helical" evidence="1">
    <location>
        <begin position="204"/>
        <end position="224"/>
    </location>
</feature>
<feature type="transmembrane region" description="Helical" evidence="1">
    <location>
        <begin position="236"/>
        <end position="256"/>
    </location>
</feature>
<feature type="transmembrane region" description="Helical" evidence="1">
    <location>
        <begin position="265"/>
        <end position="285"/>
    </location>
</feature>
<feature type="transmembrane region" description="Helical" evidence="1">
    <location>
        <begin position="289"/>
        <end position="309"/>
    </location>
</feature>
<feature type="transmembrane region" description="Helical" evidence="1">
    <location>
        <begin position="325"/>
        <end position="345"/>
    </location>
</feature>
<feature type="transmembrane region" description="Helical" evidence="1">
    <location>
        <begin position="349"/>
        <end position="369"/>
    </location>
</feature>
<protein>
    <recommendedName>
        <fullName evidence="1">Uncharacterized MFS-type transporter YcaD</fullName>
    </recommendedName>
</protein>
<dbReference type="EMBL" id="CU928158">
    <property type="protein sequence ID" value="CAQ88574.1"/>
    <property type="molecule type" value="Genomic_DNA"/>
</dbReference>
<dbReference type="RefSeq" id="WP_000029922.1">
    <property type="nucleotide sequence ID" value="NC_011740.1"/>
</dbReference>
<dbReference type="SMR" id="B7LN63"/>
<dbReference type="KEGG" id="efe:EFER_1045"/>
<dbReference type="HOGENOM" id="CLU_035018_1_2_6"/>
<dbReference type="OrthoDB" id="9810614at2"/>
<dbReference type="Proteomes" id="UP000000745">
    <property type="component" value="Chromosome"/>
</dbReference>
<dbReference type="GO" id="GO:0005886">
    <property type="term" value="C:plasma membrane"/>
    <property type="evidence" value="ECO:0007669"/>
    <property type="project" value="UniProtKB-SubCell"/>
</dbReference>
<dbReference type="GO" id="GO:0022857">
    <property type="term" value="F:transmembrane transporter activity"/>
    <property type="evidence" value="ECO:0007669"/>
    <property type="project" value="UniProtKB-UniRule"/>
</dbReference>
<dbReference type="CDD" id="cd17477">
    <property type="entry name" value="MFS_YcaD_like"/>
    <property type="match status" value="1"/>
</dbReference>
<dbReference type="FunFam" id="1.20.1250.20:FF:000041">
    <property type="entry name" value="Uncharacterized MFS-type transporter YcaD"/>
    <property type="match status" value="1"/>
</dbReference>
<dbReference type="FunFam" id="1.20.1250.20:FF:000066">
    <property type="entry name" value="Uncharacterized MFS-type transporter YcaD"/>
    <property type="match status" value="1"/>
</dbReference>
<dbReference type="Gene3D" id="1.20.1250.20">
    <property type="entry name" value="MFS general substrate transporter like domains"/>
    <property type="match status" value="2"/>
</dbReference>
<dbReference type="HAMAP" id="MF_01149">
    <property type="entry name" value="MFS_YcaD"/>
    <property type="match status" value="1"/>
</dbReference>
<dbReference type="InterPro" id="IPR011701">
    <property type="entry name" value="MFS"/>
</dbReference>
<dbReference type="InterPro" id="IPR020846">
    <property type="entry name" value="MFS_dom"/>
</dbReference>
<dbReference type="InterPro" id="IPR036259">
    <property type="entry name" value="MFS_trans_sf"/>
</dbReference>
<dbReference type="InterPro" id="IPR023745">
    <property type="entry name" value="MFS_YcaD"/>
</dbReference>
<dbReference type="InterPro" id="IPR047200">
    <property type="entry name" value="MFS_YcaD-like"/>
</dbReference>
<dbReference type="NCBIfam" id="NF002962">
    <property type="entry name" value="PRK03633.1"/>
    <property type="match status" value="1"/>
</dbReference>
<dbReference type="PANTHER" id="PTHR23521">
    <property type="entry name" value="TRANSPORTER MFS SUPERFAMILY"/>
    <property type="match status" value="1"/>
</dbReference>
<dbReference type="PANTHER" id="PTHR23521:SF2">
    <property type="entry name" value="TRANSPORTER MFS SUPERFAMILY"/>
    <property type="match status" value="1"/>
</dbReference>
<dbReference type="Pfam" id="PF07690">
    <property type="entry name" value="MFS_1"/>
    <property type="match status" value="1"/>
</dbReference>
<dbReference type="SUPFAM" id="SSF103473">
    <property type="entry name" value="MFS general substrate transporter"/>
    <property type="match status" value="1"/>
</dbReference>
<dbReference type="PROSITE" id="PS50850">
    <property type="entry name" value="MFS"/>
    <property type="match status" value="1"/>
</dbReference>
<keyword id="KW-0997">Cell inner membrane</keyword>
<keyword id="KW-1003">Cell membrane</keyword>
<keyword id="KW-0472">Membrane</keyword>
<keyword id="KW-0812">Transmembrane</keyword>
<keyword id="KW-1133">Transmembrane helix</keyword>
<keyword id="KW-0813">Transport</keyword>
<accession>B7LN63</accession>
<proteinExistence type="inferred from homology"/>